<proteinExistence type="evidence at protein level"/>
<gene>
    <name evidence="3" type="primary">chrC</name>
    <name type="ordered locus">Rmet_6201</name>
    <name type="ORF">RMe0091</name>
</gene>
<comment type="function">
    <text evidence="5">Destroys superoxide anion radicals which are normally produced within the cells and which are toxic to biological systems.</text>
</comment>
<comment type="catalytic activity">
    <reaction evidence="2">
        <text>2 superoxide + 2 H(+) = H2O2 + O2</text>
        <dbReference type="Rhea" id="RHEA:20696"/>
        <dbReference type="ChEBI" id="CHEBI:15378"/>
        <dbReference type="ChEBI" id="CHEBI:15379"/>
        <dbReference type="ChEBI" id="CHEBI:16240"/>
        <dbReference type="ChEBI" id="CHEBI:18421"/>
        <dbReference type="EC" id="1.15.1.1"/>
    </reaction>
</comment>
<comment type="cofactor">
    <cofactor evidence="5">
        <name>Fe cation</name>
        <dbReference type="ChEBI" id="CHEBI:24875"/>
    </cofactor>
    <text evidence="1">Binds 1 Fe cation per subunit.</text>
</comment>
<comment type="subunit">
    <text evidence="5">Homotetramer.</text>
</comment>
<comment type="induction">
    <text evidence="2">By chromate; induction increases when cells are grown in the presence of high sulfate concentrations (3 mM NaSO4(2-)).</text>
</comment>
<comment type="miscellaneous">
    <text evidence="5">This protein is not essential for chromate resistance, however it may contribute to resistance under certain environmental conditions.</text>
</comment>
<comment type="similarity">
    <text evidence="4">Belongs to the iron/manganese superoxide dismutase family.</text>
</comment>
<organism>
    <name type="scientific">Cupriavidus metallidurans (strain ATCC 43123 / DSM 2839 / NBRC 102507 / CH34)</name>
    <name type="common">Ralstonia metallidurans</name>
    <dbReference type="NCBI Taxonomy" id="266264"/>
    <lineage>
        <taxon>Bacteria</taxon>
        <taxon>Pseudomonadati</taxon>
        <taxon>Pseudomonadota</taxon>
        <taxon>Betaproteobacteria</taxon>
        <taxon>Burkholderiales</taxon>
        <taxon>Burkholderiaceae</taxon>
        <taxon>Cupriavidus</taxon>
    </lineage>
</organism>
<dbReference type="EC" id="1.15.1.1" evidence="2"/>
<dbReference type="EMBL" id="X90708">
    <property type="protein sequence ID" value="CAI30235.1"/>
    <property type="molecule type" value="Genomic_DNA"/>
</dbReference>
<dbReference type="EMBL" id="CP000355">
    <property type="protein sequence ID" value="ABF13060.1"/>
    <property type="molecule type" value="Genomic_DNA"/>
</dbReference>
<dbReference type="EMBL" id="AJ313327">
    <property type="protein sequence ID" value="CAC42412.1"/>
    <property type="molecule type" value="Genomic_DNA"/>
</dbReference>
<dbReference type="PIR" id="C35177">
    <property type="entry name" value="C35177"/>
</dbReference>
<dbReference type="RefSeq" id="WP_011239974.1">
    <property type="nucleotide sequence ID" value="NC_007972.2"/>
</dbReference>
<dbReference type="RefSeq" id="YP_161713.1">
    <property type="nucleotide sequence ID" value="NC_006525.1"/>
</dbReference>
<dbReference type="SMR" id="P17550"/>
<dbReference type="KEGG" id="rme:Rmet_6201"/>
<dbReference type="HOGENOM" id="CLU_031625_2_2_4"/>
<dbReference type="Proteomes" id="UP000002429">
    <property type="component" value="Plasmid pMOL28"/>
</dbReference>
<dbReference type="GO" id="GO:0046872">
    <property type="term" value="F:metal ion binding"/>
    <property type="evidence" value="ECO:0007669"/>
    <property type="project" value="UniProtKB-KW"/>
</dbReference>
<dbReference type="GO" id="GO:0004784">
    <property type="term" value="F:superoxide dismutase activity"/>
    <property type="evidence" value="ECO:0000314"/>
    <property type="project" value="CACAO"/>
</dbReference>
<dbReference type="GO" id="GO:0046687">
    <property type="term" value="P:response to chromate"/>
    <property type="evidence" value="ECO:0007669"/>
    <property type="project" value="UniProtKB-KW"/>
</dbReference>
<dbReference type="FunFam" id="3.55.40.20:FF:000004">
    <property type="entry name" value="Superoxide dismutase [Fe]"/>
    <property type="match status" value="1"/>
</dbReference>
<dbReference type="Gene3D" id="3.55.40.20">
    <property type="entry name" value="Iron/manganese superoxide dismutase, C-terminal domain"/>
    <property type="match status" value="1"/>
</dbReference>
<dbReference type="InterPro" id="IPR050265">
    <property type="entry name" value="Fe/Mn_Superoxide_Dismutase"/>
</dbReference>
<dbReference type="InterPro" id="IPR001189">
    <property type="entry name" value="Mn/Fe_SOD"/>
</dbReference>
<dbReference type="InterPro" id="IPR019832">
    <property type="entry name" value="Mn/Fe_SOD_C"/>
</dbReference>
<dbReference type="InterPro" id="IPR036324">
    <property type="entry name" value="Mn/Fe_SOD_N_sf"/>
</dbReference>
<dbReference type="InterPro" id="IPR036314">
    <property type="entry name" value="SOD_C_sf"/>
</dbReference>
<dbReference type="PANTHER" id="PTHR11404">
    <property type="entry name" value="SUPEROXIDE DISMUTASE 2"/>
    <property type="match status" value="1"/>
</dbReference>
<dbReference type="PANTHER" id="PTHR11404:SF6">
    <property type="entry name" value="SUPEROXIDE DISMUTASE [MN], MITOCHONDRIAL"/>
    <property type="match status" value="1"/>
</dbReference>
<dbReference type="Pfam" id="PF02777">
    <property type="entry name" value="Sod_Fe_C"/>
    <property type="match status" value="1"/>
</dbReference>
<dbReference type="PIRSF" id="PIRSF000349">
    <property type="entry name" value="SODismutase"/>
    <property type="match status" value="1"/>
</dbReference>
<dbReference type="SUPFAM" id="SSF54719">
    <property type="entry name" value="Fe,Mn superoxide dismutase (SOD), C-terminal domain"/>
    <property type="match status" value="1"/>
</dbReference>
<dbReference type="SUPFAM" id="SSF46609">
    <property type="entry name" value="Fe,Mn superoxide dismutase (SOD), N-terminal domain"/>
    <property type="match status" value="1"/>
</dbReference>
<reference key="1">
    <citation type="journal article" date="2002" name="Arch. Microbiol.">
        <title>New genes involved in chromate resistance in Ralstonia metallidurans strain CH34.</title>
        <authorList>
            <person name="Juhnke S."/>
            <person name="Peitzsch N."/>
            <person name="Huebener N."/>
            <person name="Grosse C."/>
            <person name="Nies D.H."/>
        </authorList>
    </citation>
    <scope>NUCLEOTIDE SEQUENCE [GENOMIC DNA]</scope>
    <scope>FUNCTION</scope>
    <scope>CATALYTIC ACTIVITY</scope>
    <scope>SUGGESTION OF METAL-BINDING</scope>
    <scope>SUBUNIT</scope>
    <scope>INDUCTION</scope>
    <source>
        <strain>ATCC 43123 / DSM 2839 / NBRC 102507 / CH34</strain>
    </source>
</reference>
<reference key="2">
    <citation type="journal article" date="1990" name="J. Biol. Chem.">
        <title>Nucleotide sequence and expression of a plasmid-encoded chromate resistance determinant from Alcaligenes eutrophus.</title>
        <authorList>
            <person name="Nies A."/>
            <person name="Nies D.H."/>
            <person name="Silver S."/>
        </authorList>
    </citation>
    <scope>NUCLEOTIDE SEQUENCE [GENOMIC DNA] OF 1-69</scope>
</reference>
<reference key="3">
    <citation type="submission" date="2004-10" db="EMBL/GenBank/DDBJ databases">
        <title>Sequence and features of the Ralstonia metallidurans CH34 heavy metal plasmids pMOL28 and pMOL30.</title>
        <authorList>
            <person name="van der Lelie D."/>
            <person name="Monchy S."/>
            <person name="Taghavi S."/>
            <person name="McCorkle S."/>
            <person name="Dunn J."/>
            <person name="Benotmane M."/>
            <person name="Vallaeys T."/>
            <person name="Lapidus A."/>
            <person name="Mergeay M."/>
        </authorList>
    </citation>
    <scope>NUCLEOTIDE SEQUENCE [LARGE SCALE GENOMIC DNA]</scope>
</reference>
<reference key="4">
    <citation type="journal article" date="2010" name="PLoS ONE">
        <title>The complete genome sequence of Cupriavidus metallidurans strain CH34, a master survivalist in harsh and anthropogenic environments.</title>
        <authorList>
            <person name="Janssen P.J."/>
            <person name="Van Houdt R."/>
            <person name="Moors H."/>
            <person name="Monsieurs P."/>
            <person name="Morin N."/>
            <person name="Michaux A."/>
            <person name="Benotmane M.A."/>
            <person name="Leys N."/>
            <person name="Vallaeys T."/>
            <person name="Lapidus A."/>
            <person name="Monchy S."/>
            <person name="Medigue C."/>
            <person name="Taghavi S."/>
            <person name="McCorkle S."/>
            <person name="Dunn J."/>
            <person name="van der Lelie D."/>
            <person name="Mergeay M."/>
        </authorList>
    </citation>
    <scope>NUCLEOTIDE SEQUENCE [LARGE SCALE GENOMIC DNA]</scope>
    <source>
        <strain>ATCC 43123 / DSM 2839 / NBRC 102507 / CH34</strain>
    </source>
</reference>
<name>SODM_CUPMC</name>
<geneLocation type="plasmid">
    <name>pMOL28</name>
</geneLocation>
<keyword id="KW-0155">Chromate resistance</keyword>
<keyword id="KW-0408">Iron</keyword>
<keyword id="KW-0479">Metal-binding</keyword>
<keyword id="KW-0560">Oxidoreductase</keyword>
<keyword id="KW-0614">Plasmid</keyword>
<keyword id="KW-1185">Reference proteome</keyword>
<feature type="chain" id="PRO_0000160011" description="Superoxide dismutase [Fe]">
    <location>
        <begin position="1"/>
        <end position="197"/>
    </location>
</feature>
<feature type="binding site" evidence="1">
    <location>
        <position position="26"/>
    </location>
    <ligand>
        <name>Fe cation</name>
        <dbReference type="ChEBI" id="CHEBI:24875"/>
    </ligand>
</feature>
<feature type="binding site" evidence="1">
    <location>
        <position position="75"/>
    </location>
    <ligand>
        <name>Fe cation</name>
        <dbReference type="ChEBI" id="CHEBI:24875"/>
    </ligand>
</feature>
<feature type="binding site" evidence="1">
    <location>
        <position position="157"/>
    </location>
    <ligand>
        <name>Fe cation</name>
        <dbReference type="ChEBI" id="CHEBI:24875"/>
    </ligand>
</feature>
<feature type="binding site" evidence="1">
    <location>
        <position position="161"/>
    </location>
    <ligand>
        <name>Fe cation</name>
        <dbReference type="ChEBI" id="CHEBI:24875"/>
    </ligand>
</feature>
<protein>
    <recommendedName>
        <fullName>Superoxide dismutase [Fe]</fullName>
        <ecNumber evidence="2">1.15.1.1</ecNumber>
    </recommendedName>
</protein>
<accession>P17550</accession>
<accession>Q5NUZ9</accession>
<accession>Q93JN0</accession>
<sequence length="197" mass="21565">MLYEMKPLGCEPAKLTGLSEKLIFSHYENNYGGAVKRLNAITATLAELDMATAPVFTLNGLKREELIATNSMILHEVYFDSLGDGGSLDGALKTAIERDFGSVERWQAEFTAMGKALGGGSGWVLLTYSPRDGRLVNQWASDHAHTLAGGTPVLALDMYEHSYHMDYGAKAAAYVDAFMQNIHWQRAATRFAAAVRD</sequence>
<evidence type="ECO:0000250" key="1">
    <source>
        <dbReference type="UniProtKB" id="Q9X6W9"/>
    </source>
</evidence>
<evidence type="ECO:0000269" key="2">
    <source>
    </source>
</evidence>
<evidence type="ECO:0000303" key="3">
    <source>
    </source>
</evidence>
<evidence type="ECO:0000305" key="4"/>
<evidence type="ECO:0000305" key="5">
    <source>
    </source>
</evidence>